<accession>Q1LW01</accession>
<accession>Q75NR9</accession>
<sequence>MDIRASLSILLLLFGLSQASPLREFEAIFVSEPETVDITTQILETNKGSSEVLFEGDVVLPKNRNALICEDKSCFWKKNANNIVEVPYVVSGEFSINDKSVIANAISIFHAQTCIRFVPRSIQADYLSIENKDGCYSAIGRTGGKQVVSLNRKGCVYSGIAQHELNHALGFYHEQSRSDRDQYVRINWNNISPGMAYNFLKQKTNNQNTPYDYGSLMHYGKTAFAIQPGLETITPIPDENVQIGQRQGLSKIDILRINKLYGC</sequence>
<dbReference type="EC" id="3.4.24.67" evidence="4 5"/>
<dbReference type="EMBL" id="AB175621">
    <property type="protein sequence ID" value="BAD15105.1"/>
    <property type="molecule type" value="mRNA"/>
</dbReference>
<dbReference type="EMBL" id="BX649296">
    <property type="status" value="NOT_ANNOTATED_CDS"/>
    <property type="molecule type" value="Genomic_DNA"/>
</dbReference>
<dbReference type="EMBL" id="BC133961">
    <property type="protein sequence ID" value="AAI33962.1"/>
    <property type="molecule type" value="mRNA"/>
</dbReference>
<dbReference type="RefSeq" id="NP_998800.2">
    <property type="nucleotide sequence ID" value="NM_213635.2"/>
</dbReference>
<dbReference type="PDB" id="3LQB">
    <property type="method" value="X-ray"/>
    <property type="resolution" value="1.10 A"/>
    <property type="chains" value="A=65-263"/>
</dbReference>
<dbReference type="PDBsum" id="3LQB"/>
<dbReference type="SMR" id="Q1LW01"/>
<dbReference type="FunCoup" id="Q1LW01">
    <property type="interactions" value="276"/>
</dbReference>
<dbReference type="STRING" id="7955.ENSDARP00000009264"/>
<dbReference type="MEROPS" id="M12.007"/>
<dbReference type="PaxDb" id="7955-ENSDARP00000009264"/>
<dbReference type="Ensembl" id="ENSDART00000018432">
    <property type="protein sequence ID" value="ENSDARP00000009264"/>
    <property type="gene ID" value="ENSDARG00000019122"/>
</dbReference>
<dbReference type="GeneID" id="407971"/>
<dbReference type="KEGG" id="dre:407971"/>
<dbReference type="AGR" id="ZFIN:ZDB-GENE-030131-2100"/>
<dbReference type="CTD" id="407971"/>
<dbReference type="ZFIN" id="ZDB-GENE-030131-2100">
    <property type="gene designation" value="he1.2"/>
</dbReference>
<dbReference type="eggNOG" id="KOG3714">
    <property type="taxonomic scope" value="Eukaryota"/>
</dbReference>
<dbReference type="InParanoid" id="Q1LW01"/>
<dbReference type="OMA" id="RMERDDY"/>
<dbReference type="OrthoDB" id="291007at2759"/>
<dbReference type="PhylomeDB" id="Q1LW01"/>
<dbReference type="TreeFam" id="TF315280"/>
<dbReference type="EvolutionaryTrace" id="Q1LW01"/>
<dbReference type="PRO" id="PR:Q1LW01"/>
<dbReference type="Proteomes" id="UP000000437">
    <property type="component" value="Chromosome 22"/>
</dbReference>
<dbReference type="Bgee" id="ENSDARG00000019122">
    <property type="expression patterns" value="Expressed in internal ear and 5 other cell types or tissues"/>
</dbReference>
<dbReference type="GO" id="GO:0005576">
    <property type="term" value="C:extracellular region"/>
    <property type="evidence" value="ECO:0007669"/>
    <property type="project" value="UniProtKB-SubCell"/>
</dbReference>
<dbReference type="GO" id="GO:0004222">
    <property type="term" value="F:metalloendopeptidase activity"/>
    <property type="evidence" value="ECO:0000314"/>
    <property type="project" value="UniProtKB"/>
</dbReference>
<dbReference type="GO" id="GO:0008237">
    <property type="term" value="F:metallopeptidase activity"/>
    <property type="evidence" value="ECO:0000314"/>
    <property type="project" value="ZFIN"/>
</dbReference>
<dbReference type="GO" id="GO:0008270">
    <property type="term" value="F:zinc ion binding"/>
    <property type="evidence" value="ECO:0000314"/>
    <property type="project" value="UniProtKB"/>
</dbReference>
<dbReference type="GO" id="GO:0035188">
    <property type="term" value="P:hatching"/>
    <property type="evidence" value="ECO:0000314"/>
    <property type="project" value="ZFIN"/>
</dbReference>
<dbReference type="GO" id="GO:0006508">
    <property type="term" value="P:proteolysis"/>
    <property type="evidence" value="ECO:0000314"/>
    <property type="project" value="UniProtKB"/>
</dbReference>
<dbReference type="CDD" id="cd04283">
    <property type="entry name" value="ZnMc_hatching_enzyme"/>
    <property type="match status" value="1"/>
</dbReference>
<dbReference type="FunFam" id="3.40.390.10:FF:000040">
    <property type="entry name" value="Metalloendopeptidase"/>
    <property type="match status" value="1"/>
</dbReference>
<dbReference type="Gene3D" id="3.40.390.10">
    <property type="entry name" value="Collagenase (Catalytic Domain)"/>
    <property type="match status" value="1"/>
</dbReference>
<dbReference type="InterPro" id="IPR024079">
    <property type="entry name" value="MetalloPept_cat_dom_sf"/>
</dbReference>
<dbReference type="InterPro" id="IPR001506">
    <property type="entry name" value="Peptidase_M12A"/>
</dbReference>
<dbReference type="InterPro" id="IPR006026">
    <property type="entry name" value="Peptidase_Metallo"/>
</dbReference>
<dbReference type="InterPro" id="IPR034039">
    <property type="entry name" value="ZnMP_hatching_enz"/>
</dbReference>
<dbReference type="PANTHER" id="PTHR10127">
    <property type="entry name" value="DISCOIDIN, CUB, EGF, LAMININ , AND ZINC METALLOPROTEASE DOMAIN CONTAINING"/>
    <property type="match status" value="1"/>
</dbReference>
<dbReference type="PANTHER" id="PTHR10127:SF839">
    <property type="entry name" value="HATCHING ENZYME 1.2-RELATED"/>
    <property type="match status" value="1"/>
</dbReference>
<dbReference type="Pfam" id="PF01400">
    <property type="entry name" value="Astacin"/>
    <property type="match status" value="1"/>
</dbReference>
<dbReference type="PRINTS" id="PR00480">
    <property type="entry name" value="ASTACIN"/>
</dbReference>
<dbReference type="SMART" id="SM00235">
    <property type="entry name" value="ZnMc"/>
    <property type="match status" value="1"/>
</dbReference>
<dbReference type="SUPFAM" id="SSF55486">
    <property type="entry name" value="Metalloproteases ('zincins'), catalytic domain"/>
    <property type="match status" value="1"/>
</dbReference>
<dbReference type="PROSITE" id="PS51864">
    <property type="entry name" value="ASTACIN"/>
    <property type="match status" value="1"/>
</dbReference>
<dbReference type="PROSITE" id="PS00142">
    <property type="entry name" value="ZINC_PROTEASE"/>
    <property type="match status" value="1"/>
</dbReference>
<feature type="signal peptide" evidence="1">
    <location>
        <begin position="1"/>
        <end position="19"/>
    </location>
</feature>
<feature type="propeptide" id="PRO_0000452500" description="Activation peptide" evidence="8">
    <location>
        <begin position="20"/>
        <end position="64"/>
    </location>
</feature>
<feature type="chain" id="PRO_5015019995" description="Hatching enzyme 1.2" evidence="4">
    <location>
        <begin position="65"/>
        <end position="263"/>
    </location>
</feature>
<feature type="domain" description="Peptidase M12A" evidence="2">
    <location>
        <begin position="65"/>
        <end position="263"/>
    </location>
</feature>
<feature type="active site" evidence="2">
    <location>
        <position position="164"/>
    </location>
</feature>
<feature type="binding site" evidence="5 14">
    <location>
        <position position="163"/>
    </location>
    <ligand>
        <name>Zn(2+)</name>
        <dbReference type="ChEBI" id="CHEBI:29105"/>
        <note>catalytic</note>
    </ligand>
</feature>
<feature type="binding site" evidence="5 14">
    <location>
        <position position="167"/>
    </location>
    <ligand>
        <name>Zn(2+)</name>
        <dbReference type="ChEBI" id="CHEBI:29105"/>
        <note>catalytic</note>
    </ligand>
</feature>
<feature type="binding site" evidence="5 14">
    <location>
        <position position="173"/>
    </location>
    <ligand>
        <name>Zn(2+)</name>
        <dbReference type="ChEBI" id="CHEBI:29105"/>
        <note>catalytic</note>
    </ligand>
</feature>
<feature type="disulfide bond" evidence="5 14">
    <location>
        <begin position="69"/>
        <end position="74"/>
    </location>
</feature>
<feature type="disulfide bond" evidence="5 14">
    <location>
        <begin position="114"/>
        <end position="263"/>
    </location>
</feature>
<feature type="disulfide bond" evidence="5 14">
    <location>
        <begin position="135"/>
        <end position="155"/>
    </location>
</feature>
<feature type="sequence conflict" description="In Ref. 1; BAD15105." evidence="8" ref="1">
    <original>I</original>
    <variation>V</variation>
    <location>
        <position position="28"/>
    </location>
</feature>
<feature type="sequence conflict" description="In Ref. 1; BAD15105." evidence="8" ref="1">
    <original>R</original>
    <variation>G</variation>
    <location>
        <position position="256"/>
    </location>
</feature>
<feature type="strand" evidence="15">
    <location>
        <begin position="84"/>
        <end position="90"/>
    </location>
</feature>
<feature type="helix" evidence="15">
    <location>
        <begin position="96"/>
        <end position="112"/>
    </location>
</feature>
<feature type="strand" evidence="15">
    <location>
        <begin position="113"/>
        <end position="119"/>
    </location>
</feature>
<feature type="strand" evidence="15">
    <location>
        <begin position="124"/>
        <end position="130"/>
    </location>
</feature>
<feature type="strand" evidence="15">
    <location>
        <begin position="133"/>
        <end position="137"/>
    </location>
</feature>
<feature type="strand" evidence="15">
    <location>
        <begin position="143"/>
        <end position="150"/>
    </location>
</feature>
<feature type="turn" evidence="15">
    <location>
        <begin position="152"/>
        <end position="154"/>
    </location>
</feature>
<feature type="helix" evidence="15">
    <location>
        <begin position="158"/>
        <end position="169"/>
    </location>
</feature>
<feature type="helix" evidence="15">
    <location>
        <begin position="174"/>
        <end position="176"/>
    </location>
</feature>
<feature type="helix" evidence="15">
    <location>
        <begin position="180"/>
        <end position="182"/>
    </location>
</feature>
<feature type="strand" evidence="15">
    <location>
        <begin position="184"/>
        <end position="186"/>
    </location>
</feature>
<feature type="helix" evidence="15">
    <location>
        <begin position="188"/>
        <end position="190"/>
    </location>
</feature>
<feature type="helix" evidence="15">
    <location>
        <begin position="196"/>
        <end position="199"/>
    </location>
</feature>
<feature type="turn" evidence="15">
    <location>
        <begin position="221"/>
        <end position="224"/>
    </location>
</feature>
<feature type="strand" evidence="15">
    <location>
        <begin position="225"/>
        <end position="227"/>
    </location>
</feature>
<feature type="strand" evidence="15">
    <location>
        <begin position="232"/>
        <end position="237"/>
    </location>
</feature>
<feature type="helix" evidence="15">
    <location>
        <begin position="251"/>
        <end position="261"/>
    </location>
</feature>
<comment type="function">
    <text evidence="4 5">Metalloendopeptidase which participates in the breakdown of the egg envelope at the time of hatching. Cleaves the N-terminal regions of the zona pellucia glycoproteins ZP2 and ZP3, where it specifically recognizes the peptide sequences TVQQS-|-DYLIK (major site) and KLMLK-|-APEPF (minor site).</text>
</comment>
<comment type="catalytic activity">
    <reaction evidence="4 5">
        <text>Hydrolysis of the inner layer of fish egg envelope. Also hydrolysis of casein and small molecule substrates such as succinyl-Leu-Leu-Val-Tyr-|-7-(4-methyl)coumarylamide.</text>
        <dbReference type="EC" id="3.4.24.67"/>
    </reaction>
</comment>
<comment type="cofactor">
    <cofactor evidence="2 3 9">
        <name>Zn(2+)</name>
        <dbReference type="ChEBI" id="CHEBI:29105"/>
    </cofactor>
    <text evidence="2 3 9">Binds 1 zinc ion per subunit.</text>
</comment>
<comment type="subcellular location">
    <subcellularLocation>
        <location evidence="4">Secreted</location>
    </subcellularLocation>
</comment>
<comment type="tissue specificity">
    <text evidence="4 6">Expressed in cells of the hatching gland.</text>
</comment>
<comment type="developmental stage">
    <text evidence="4 6">Detected in embryos just before the bud stage, in an oval patch in the polster (anterior prechordal plate) (PubMed:9108332). At the 3-somite stage, found in a horseshoe-shaped cluster of cells surrounding the head primordium (PubMed:9108332). From 24 hours post-fertilization (hpf) onwards, expressed in a belt-like shape on the anterior surface of the yolk sac (PubMed:19021768, PubMed:9108332). Little or no expression detected after hatching (PubMed:19021768, PubMed:9108332).</text>
</comment>
<evidence type="ECO:0000255" key="1"/>
<evidence type="ECO:0000255" key="2">
    <source>
        <dbReference type="PROSITE-ProRule" id="PRU01211"/>
    </source>
</evidence>
<evidence type="ECO:0000255" key="3">
    <source>
        <dbReference type="RuleBase" id="RU361183"/>
    </source>
</evidence>
<evidence type="ECO:0000269" key="4">
    <source>
    </source>
</evidence>
<evidence type="ECO:0000269" key="5">
    <source>
    </source>
</evidence>
<evidence type="ECO:0000269" key="6">
    <source>
    </source>
</evidence>
<evidence type="ECO:0000303" key="7">
    <source>
    </source>
</evidence>
<evidence type="ECO:0000305" key="8"/>
<evidence type="ECO:0000305" key="9">
    <source>
    </source>
</evidence>
<evidence type="ECO:0000312" key="10">
    <source>
        <dbReference type="EMBL" id="AAI33962.1"/>
    </source>
</evidence>
<evidence type="ECO:0000312" key="11">
    <source>
        <dbReference type="EMBL" id="BAD15105.1"/>
    </source>
</evidence>
<evidence type="ECO:0000312" key="12">
    <source>
        <dbReference type="Proteomes" id="UP000000437"/>
    </source>
</evidence>
<evidence type="ECO:0000312" key="13">
    <source>
        <dbReference type="ZFIN" id="ZDB-GENE-030131-2100"/>
    </source>
</evidence>
<evidence type="ECO:0007744" key="14">
    <source>
        <dbReference type="PDB" id="3LQB"/>
    </source>
</evidence>
<evidence type="ECO:0007829" key="15">
    <source>
        <dbReference type="PDB" id="3LQB"/>
    </source>
</evidence>
<keyword id="KW-0002">3D-structure</keyword>
<keyword id="KW-0903">Direct protein sequencing</keyword>
<keyword id="KW-1015">Disulfide bond</keyword>
<keyword id="KW-0378">Hydrolase</keyword>
<keyword id="KW-0479">Metal-binding</keyword>
<keyword id="KW-0482">Metalloprotease</keyword>
<keyword id="KW-0645">Protease</keyword>
<keyword id="KW-1185">Reference proteome</keyword>
<keyword id="KW-0964">Secreted</keyword>
<keyword id="KW-0732">Signal</keyword>
<keyword id="KW-0862">Zinc</keyword>
<keyword id="KW-0865">Zymogen</keyword>
<protein>
    <recommendedName>
        <fullName evidence="8">Hatching enzyme 1.2</fullName>
        <ecNumber evidence="4 5">3.4.24.67</ecNumber>
    </recommendedName>
    <alternativeName>
        <fullName evidence="7">Choriolysin H homolog 1</fullName>
    </alternativeName>
    <alternativeName>
        <fullName evidence="7">High choriolytic enzyme 1 homolog</fullName>
        <shortName evidence="7">zHCE-1</shortName>
    </alternativeName>
</protein>
<proteinExistence type="evidence at protein level"/>
<reference evidence="11" key="1">
    <citation type="journal article" date="1997" name="Dev. Growth Differ.">
        <title>Species-dependent migration of fish hatching gland cells that express astacin-like proteases in common.</title>
        <authorList>
            <person name="Inohaya K."/>
            <person name="Yasumasu S."/>
            <person name="Araki K."/>
            <person name="Naruse K."/>
            <person name="Yamazaki K."/>
            <person name="Yasumasu I."/>
            <person name="Iuchi I."/>
            <person name="Yamagami K."/>
        </authorList>
    </citation>
    <scope>NUCLEOTIDE SEQUENCE [MRNA]</scope>
    <scope>TISSUE SPECIFICITY</scope>
    <scope>DEVELOPMENTAL STAGE</scope>
</reference>
<reference evidence="12" key="2">
    <citation type="journal article" date="2013" name="Nature">
        <title>The zebrafish reference genome sequence and its relationship to the human genome.</title>
        <authorList>
            <person name="Howe K."/>
            <person name="Clark M.D."/>
            <person name="Torroja C.F."/>
            <person name="Torrance J."/>
            <person name="Berthelot C."/>
            <person name="Muffato M."/>
            <person name="Collins J.E."/>
            <person name="Humphray S."/>
            <person name="McLaren K."/>
            <person name="Matthews L."/>
            <person name="McLaren S."/>
            <person name="Sealy I."/>
            <person name="Caccamo M."/>
            <person name="Churcher C."/>
            <person name="Scott C."/>
            <person name="Barrett J.C."/>
            <person name="Koch R."/>
            <person name="Rauch G.J."/>
            <person name="White S."/>
            <person name="Chow W."/>
            <person name="Kilian B."/>
            <person name="Quintais L.T."/>
            <person name="Guerra-Assuncao J.A."/>
            <person name="Zhou Y."/>
            <person name="Gu Y."/>
            <person name="Yen J."/>
            <person name="Vogel J.H."/>
            <person name="Eyre T."/>
            <person name="Redmond S."/>
            <person name="Banerjee R."/>
            <person name="Chi J."/>
            <person name="Fu B."/>
            <person name="Langley E."/>
            <person name="Maguire S.F."/>
            <person name="Laird G.K."/>
            <person name="Lloyd D."/>
            <person name="Kenyon E."/>
            <person name="Donaldson S."/>
            <person name="Sehra H."/>
            <person name="Almeida-King J."/>
            <person name="Loveland J."/>
            <person name="Trevanion S."/>
            <person name="Jones M."/>
            <person name="Quail M."/>
            <person name="Willey D."/>
            <person name="Hunt A."/>
            <person name="Burton J."/>
            <person name="Sims S."/>
            <person name="McLay K."/>
            <person name="Plumb B."/>
            <person name="Davis J."/>
            <person name="Clee C."/>
            <person name="Oliver K."/>
            <person name="Clark R."/>
            <person name="Riddle C."/>
            <person name="Elliot D."/>
            <person name="Threadgold G."/>
            <person name="Harden G."/>
            <person name="Ware D."/>
            <person name="Begum S."/>
            <person name="Mortimore B."/>
            <person name="Kerry G."/>
            <person name="Heath P."/>
            <person name="Phillimore B."/>
            <person name="Tracey A."/>
            <person name="Corby N."/>
            <person name="Dunn M."/>
            <person name="Johnson C."/>
            <person name="Wood J."/>
            <person name="Clark S."/>
            <person name="Pelan S."/>
            <person name="Griffiths G."/>
            <person name="Smith M."/>
            <person name="Glithero R."/>
            <person name="Howden P."/>
            <person name="Barker N."/>
            <person name="Lloyd C."/>
            <person name="Stevens C."/>
            <person name="Harley J."/>
            <person name="Holt K."/>
            <person name="Panagiotidis G."/>
            <person name="Lovell J."/>
            <person name="Beasley H."/>
            <person name="Henderson C."/>
            <person name="Gordon D."/>
            <person name="Auger K."/>
            <person name="Wright D."/>
            <person name="Collins J."/>
            <person name="Raisen C."/>
            <person name="Dyer L."/>
            <person name="Leung K."/>
            <person name="Robertson L."/>
            <person name="Ambridge K."/>
            <person name="Leongamornlert D."/>
            <person name="McGuire S."/>
            <person name="Gilderthorp R."/>
            <person name="Griffiths C."/>
            <person name="Manthravadi D."/>
            <person name="Nichol S."/>
            <person name="Barker G."/>
            <person name="Whitehead S."/>
            <person name="Kay M."/>
            <person name="Brown J."/>
            <person name="Murnane C."/>
            <person name="Gray E."/>
            <person name="Humphries M."/>
            <person name="Sycamore N."/>
            <person name="Barker D."/>
            <person name="Saunders D."/>
            <person name="Wallis J."/>
            <person name="Babbage A."/>
            <person name="Hammond S."/>
            <person name="Mashreghi-Mohammadi M."/>
            <person name="Barr L."/>
            <person name="Martin S."/>
            <person name="Wray P."/>
            <person name="Ellington A."/>
            <person name="Matthews N."/>
            <person name="Ellwood M."/>
            <person name="Woodmansey R."/>
            <person name="Clark G."/>
            <person name="Cooper J."/>
            <person name="Tromans A."/>
            <person name="Grafham D."/>
            <person name="Skuce C."/>
            <person name="Pandian R."/>
            <person name="Andrews R."/>
            <person name="Harrison E."/>
            <person name="Kimberley A."/>
            <person name="Garnett J."/>
            <person name="Fosker N."/>
            <person name="Hall R."/>
            <person name="Garner P."/>
            <person name="Kelly D."/>
            <person name="Bird C."/>
            <person name="Palmer S."/>
            <person name="Gehring I."/>
            <person name="Berger A."/>
            <person name="Dooley C.M."/>
            <person name="Ersan-Urun Z."/>
            <person name="Eser C."/>
            <person name="Geiger H."/>
            <person name="Geisler M."/>
            <person name="Karotki L."/>
            <person name="Kirn A."/>
            <person name="Konantz J."/>
            <person name="Konantz M."/>
            <person name="Oberlander M."/>
            <person name="Rudolph-Geiger S."/>
            <person name="Teucke M."/>
            <person name="Lanz C."/>
            <person name="Raddatz G."/>
            <person name="Osoegawa K."/>
            <person name="Zhu B."/>
            <person name="Rapp A."/>
            <person name="Widaa S."/>
            <person name="Langford C."/>
            <person name="Yang F."/>
            <person name="Schuster S.C."/>
            <person name="Carter N.P."/>
            <person name="Harrow J."/>
            <person name="Ning Z."/>
            <person name="Herrero J."/>
            <person name="Searle S.M."/>
            <person name="Enright A."/>
            <person name="Geisler R."/>
            <person name="Plasterk R.H."/>
            <person name="Lee C."/>
            <person name="Westerfield M."/>
            <person name="de Jong P.J."/>
            <person name="Zon L.I."/>
            <person name="Postlethwait J.H."/>
            <person name="Nusslein-Volhard C."/>
            <person name="Hubbard T.J."/>
            <person name="Roest Crollius H."/>
            <person name="Rogers J."/>
            <person name="Stemple D.L."/>
        </authorList>
    </citation>
    <scope>NUCLEOTIDE SEQUENCE [LARGE SCALE GENOMIC DNA]</scope>
    <source>
        <strain evidence="12">Tuebingen</strain>
    </source>
</reference>
<reference evidence="10" key="3">
    <citation type="submission" date="2007-03" db="EMBL/GenBank/DDBJ databases">
        <authorList>
            <consortium name="NIH - Zebrafish Gene Collection (ZGC) project"/>
        </authorList>
    </citation>
    <scope>NUCLEOTIDE SEQUENCE [LARGE SCALE MRNA]</scope>
    <source>
        <strain evidence="10">Singapore</strain>
        <tissue evidence="10">Embryo</tissue>
    </source>
</reference>
<reference evidence="8" key="4">
    <citation type="journal article" date="2008" name="FEBS J.">
        <title>Purification and characterization of zebrafish hatching enzyme - an evolutionary aspect of the mechanism of egg envelope digestion.</title>
        <authorList>
            <person name="Sano K."/>
            <person name="Inohaya K."/>
            <person name="Kawaguchi M."/>
            <person name="Yoshizaki N."/>
            <person name="Iuchi I."/>
            <person name="Yasumasu S."/>
        </authorList>
    </citation>
    <scope>PROTEIN SEQUENCE OF 65-70</scope>
    <scope>FUNCTION</scope>
    <scope>CATALYTIC ACTIVITY</scope>
    <scope>SUBCELLULAR LOCATION</scope>
    <scope>TISSUE SPECIFICITY</scope>
    <scope>DEVELOPMENTAL STAGE</scope>
</reference>
<reference evidence="8" key="5">
    <citation type="journal article" date="2009" name="Acta Crystallogr. F">
        <title>Crystallization and preliminary X-ray analysis of ZHE1, a hatching enzyme from the zebrafish Danio rerio.</title>
        <authorList>
            <person name="Okada A."/>
            <person name="Nagata K."/>
            <person name="Sano K."/>
            <person name="Yasumasu S."/>
            <person name="Kubota K."/>
            <person name="Ohtsuka J."/>
            <person name="Iuchi I."/>
            <person name="Tanokura M."/>
        </authorList>
    </citation>
    <scope>CRYSTALLIZATION</scope>
</reference>
<reference evidence="14" key="6">
    <citation type="journal article" date="2010" name="J. Mol. Biol.">
        <title>Crystal structure of zebrafish hatching enzyme 1 from the zebrafish Danio rerio.</title>
        <authorList>
            <person name="Okada A."/>
            <person name="Sano K."/>
            <person name="Nagata K."/>
            <person name="Yasumasu S."/>
            <person name="Ohtsuka J."/>
            <person name="Yamamura A."/>
            <person name="Kubota K."/>
            <person name="Iuchi I."/>
            <person name="Tanokura M."/>
        </authorList>
    </citation>
    <scope>X-RAY CRYSTALLOGRAPHY (1.10 ANGSTROMS) OF 65-263 IN COMPLEX WITH ZINC</scope>
    <scope>FUNCTION</scope>
    <scope>CATALYTIC ACTIVITY</scope>
    <scope>COFACTOR</scope>
    <scope>DISULFIDE BONDS</scope>
</reference>
<gene>
    <name evidence="13" type="primary">he1.2</name>
    <name evidence="13" type="synonym">he1</name>
    <name evidence="13" type="synonym">he1a</name>
    <name evidence="13" type="synonym">he1b</name>
</gene>
<name>HE12_DANRE</name>
<organism evidence="12">
    <name type="scientific">Danio rerio</name>
    <name type="common">Zebrafish</name>
    <name type="synonym">Brachydanio rerio</name>
    <dbReference type="NCBI Taxonomy" id="7955"/>
    <lineage>
        <taxon>Eukaryota</taxon>
        <taxon>Metazoa</taxon>
        <taxon>Chordata</taxon>
        <taxon>Craniata</taxon>
        <taxon>Vertebrata</taxon>
        <taxon>Euteleostomi</taxon>
        <taxon>Actinopterygii</taxon>
        <taxon>Neopterygii</taxon>
        <taxon>Teleostei</taxon>
        <taxon>Ostariophysi</taxon>
        <taxon>Cypriniformes</taxon>
        <taxon>Danionidae</taxon>
        <taxon>Danioninae</taxon>
        <taxon>Danio</taxon>
    </lineage>
</organism>